<accession>A3PVD7</accession>
<comment type="function">
    <text evidence="1">This is one of the proteins that bind and probably mediate the attachment of the 5S RNA into the large ribosomal subunit, where it forms part of the central protuberance. In the 70S ribosome it contacts protein S13 of the 30S subunit (bridge B1b), connecting the 2 subunits; this bridge is implicated in subunit movement. Contacts the P site tRNA; the 5S rRNA and some of its associated proteins might help stabilize positioning of ribosome-bound tRNAs.</text>
</comment>
<comment type="subunit">
    <text evidence="1">Part of the 50S ribosomal subunit; part of the 5S rRNA/L5/L18/L25 subcomplex. Contacts the 5S rRNA and the P site tRNA. Forms a bridge to the 30S subunit in the 70S ribosome.</text>
</comment>
<comment type="similarity">
    <text evidence="1">Belongs to the universal ribosomal protein uL5 family.</text>
</comment>
<keyword id="KW-0687">Ribonucleoprotein</keyword>
<keyword id="KW-0689">Ribosomal protein</keyword>
<keyword id="KW-0694">RNA-binding</keyword>
<keyword id="KW-0699">rRNA-binding</keyword>
<keyword id="KW-0820">tRNA-binding</keyword>
<reference key="1">
    <citation type="submission" date="2007-02" db="EMBL/GenBank/DDBJ databases">
        <title>Complete sequence of Mycobacterium sp. JLS.</title>
        <authorList>
            <consortium name="US DOE Joint Genome Institute"/>
            <person name="Copeland A."/>
            <person name="Lucas S."/>
            <person name="Lapidus A."/>
            <person name="Barry K."/>
            <person name="Detter J.C."/>
            <person name="Glavina del Rio T."/>
            <person name="Hammon N."/>
            <person name="Israni S."/>
            <person name="Dalin E."/>
            <person name="Tice H."/>
            <person name="Pitluck S."/>
            <person name="Chain P."/>
            <person name="Malfatti S."/>
            <person name="Shin M."/>
            <person name="Vergez L."/>
            <person name="Schmutz J."/>
            <person name="Larimer F."/>
            <person name="Land M."/>
            <person name="Hauser L."/>
            <person name="Kyrpides N."/>
            <person name="Mikhailova N."/>
            <person name="Miller C.D."/>
            <person name="Anderson A.J."/>
            <person name="Sims R.C."/>
            <person name="Richardson P."/>
        </authorList>
    </citation>
    <scope>NUCLEOTIDE SEQUENCE [LARGE SCALE GENOMIC DNA]</scope>
    <source>
        <strain>JLS</strain>
    </source>
</reference>
<protein>
    <recommendedName>
        <fullName evidence="1">Large ribosomal subunit protein uL5</fullName>
    </recommendedName>
    <alternativeName>
        <fullName evidence="2">50S ribosomal protein L5</fullName>
    </alternativeName>
</protein>
<dbReference type="EMBL" id="CP000580">
    <property type="protein sequence ID" value="ABN96864.1"/>
    <property type="molecule type" value="Genomic_DNA"/>
</dbReference>
<dbReference type="SMR" id="A3PVD7"/>
<dbReference type="KEGG" id="mjl:Mjls_1056"/>
<dbReference type="HOGENOM" id="CLU_061015_2_1_11"/>
<dbReference type="BioCyc" id="MSP164757:G1G8C-1069-MONOMER"/>
<dbReference type="GO" id="GO:1990904">
    <property type="term" value="C:ribonucleoprotein complex"/>
    <property type="evidence" value="ECO:0007669"/>
    <property type="project" value="UniProtKB-KW"/>
</dbReference>
<dbReference type="GO" id="GO:0005840">
    <property type="term" value="C:ribosome"/>
    <property type="evidence" value="ECO:0007669"/>
    <property type="project" value="UniProtKB-KW"/>
</dbReference>
<dbReference type="GO" id="GO:0019843">
    <property type="term" value="F:rRNA binding"/>
    <property type="evidence" value="ECO:0007669"/>
    <property type="project" value="UniProtKB-UniRule"/>
</dbReference>
<dbReference type="GO" id="GO:0003735">
    <property type="term" value="F:structural constituent of ribosome"/>
    <property type="evidence" value="ECO:0007669"/>
    <property type="project" value="InterPro"/>
</dbReference>
<dbReference type="GO" id="GO:0000049">
    <property type="term" value="F:tRNA binding"/>
    <property type="evidence" value="ECO:0007669"/>
    <property type="project" value="UniProtKB-UniRule"/>
</dbReference>
<dbReference type="GO" id="GO:0006412">
    <property type="term" value="P:translation"/>
    <property type="evidence" value="ECO:0007669"/>
    <property type="project" value="UniProtKB-UniRule"/>
</dbReference>
<dbReference type="FunFam" id="3.30.1440.10:FF:000001">
    <property type="entry name" value="50S ribosomal protein L5"/>
    <property type="match status" value="1"/>
</dbReference>
<dbReference type="Gene3D" id="3.30.1440.10">
    <property type="match status" value="1"/>
</dbReference>
<dbReference type="HAMAP" id="MF_01333_B">
    <property type="entry name" value="Ribosomal_uL5_B"/>
    <property type="match status" value="1"/>
</dbReference>
<dbReference type="InterPro" id="IPR002132">
    <property type="entry name" value="Ribosomal_uL5"/>
</dbReference>
<dbReference type="InterPro" id="IPR020930">
    <property type="entry name" value="Ribosomal_uL5_bac-type"/>
</dbReference>
<dbReference type="InterPro" id="IPR031309">
    <property type="entry name" value="Ribosomal_uL5_C"/>
</dbReference>
<dbReference type="InterPro" id="IPR022803">
    <property type="entry name" value="Ribosomal_uL5_dom_sf"/>
</dbReference>
<dbReference type="InterPro" id="IPR031310">
    <property type="entry name" value="Ribosomal_uL5_N"/>
</dbReference>
<dbReference type="NCBIfam" id="NF000585">
    <property type="entry name" value="PRK00010.1"/>
    <property type="match status" value="1"/>
</dbReference>
<dbReference type="PANTHER" id="PTHR11994">
    <property type="entry name" value="60S RIBOSOMAL PROTEIN L11-RELATED"/>
    <property type="match status" value="1"/>
</dbReference>
<dbReference type="Pfam" id="PF00281">
    <property type="entry name" value="Ribosomal_L5"/>
    <property type="match status" value="1"/>
</dbReference>
<dbReference type="Pfam" id="PF00673">
    <property type="entry name" value="Ribosomal_L5_C"/>
    <property type="match status" value="1"/>
</dbReference>
<dbReference type="PIRSF" id="PIRSF002161">
    <property type="entry name" value="Ribosomal_L5"/>
    <property type="match status" value="1"/>
</dbReference>
<dbReference type="SUPFAM" id="SSF55282">
    <property type="entry name" value="RL5-like"/>
    <property type="match status" value="1"/>
</dbReference>
<organism>
    <name type="scientific">Mycobacterium sp. (strain JLS)</name>
    <dbReference type="NCBI Taxonomy" id="164757"/>
    <lineage>
        <taxon>Bacteria</taxon>
        <taxon>Bacillati</taxon>
        <taxon>Actinomycetota</taxon>
        <taxon>Actinomycetes</taxon>
        <taxon>Mycobacteriales</taxon>
        <taxon>Mycobacteriaceae</taxon>
        <taxon>Mycobacterium</taxon>
    </lineage>
</organism>
<evidence type="ECO:0000255" key="1">
    <source>
        <dbReference type="HAMAP-Rule" id="MF_01333"/>
    </source>
</evidence>
<evidence type="ECO:0000305" key="2"/>
<sequence length="187" mass="21081">MTTAEKTLPRLKQRYREEIRESLQQQFGYANVMQIPGVVKVVVNMGVGDAARDAKLINGAVNDLALITGQKPEIRRARKSIAQFKLREGMPIGARVTLRGDRMWEFLDRLVAIALPRIRDFRGLNPKQFDGTGNYTFGLTEQSMFHEIDVDSIDRPRGMDITVVTSATTDDEGRALLRALGFPFKEN</sequence>
<feature type="chain" id="PRO_1000052778" description="Large ribosomal subunit protein uL5">
    <location>
        <begin position="1"/>
        <end position="187"/>
    </location>
</feature>
<name>RL5_MYCSJ</name>
<gene>
    <name evidence="1" type="primary">rplE</name>
    <name type="ordered locus">Mjls_1056</name>
</gene>
<proteinExistence type="inferred from homology"/>